<keyword id="KW-0963">Cytoplasm</keyword>
<keyword id="KW-0275">Fatty acid biosynthesis</keyword>
<keyword id="KW-0276">Fatty acid metabolism</keyword>
<keyword id="KW-0413">Isomerase</keyword>
<keyword id="KW-0444">Lipid biosynthesis</keyword>
<keyword id="KW-0443">Lipid metabolism</keyword>
<keyword id="KW-0456">Lyase</keyword>
<reference key="1">
    <citation type="submission" date="2007-08" db="EMBL/GenBank/DDBJ databases">
        <authorList>
            <consortium name="The Vibrio harveyi Genome Sequencing Project"/>
            <person name="Bassler B."/>
            <person name="Clifton S.W."/>
            <person name="Fulton L."/>
            <person name="Delehaunty K."/>
            <person name="Fronick C."/>
            <person name="Harrison M."/>
            <person name="Markivic C."/>
            <person name="Fulton R."/>
            <person name="Tin-Wollam A.-M."/>
            <person name="Shah N."/>
            <person name="Pepin K."/>
            <person name="Nash W."/>
            <person name="Thiruvilangam P."/>
            <person name="Bhonagiri V."/>
            <person name="Waters C."/>
            <person name="Tu K.C."/>
            <person name="Irgon J."/>
            <person name="Wilson R.K."/>
        </authorList>
    </citation>
    <scope>NUCLEOTIDE SEQUENCE [LARGE SCALE GENOMIC DNA]</scope>
    <source>
        <strain>ATCC BAA-1116 / BB120</strain>
    </source>
</reference>
<proteinExistence type="inferred from homology"/>
<gene>
    <name evidence="1" type="primary">fabA</name>
    <name type="ordered locus">VIBHAR_02332</name>
</gene>
<dbReference type="EC" id="4.2.1.59" evidence="1"/>
<dbReference type="EC" id="5.3.3.14" evidence="1"/>
<dbReference type="EMBL" id="CP000789">
    <property type="protein sequence ID" value="ABU71294.1"/>
    <property type="molecule type" value="Genomic_DNA"/>
</dbReference>
<dbReference type="RefSeq" id="WP_010647877.1">
    <property type="nucleotide sequence ID" value="NC_022269.1"/>
</dbReference>
<dbReference type="SMR" id="A7N0M3"/>
<dbReference type="GeneID" id="67377347"/>
<dbReference type="KEGG" id="vha:VIBHAR_02332"/>
<dbReference type="PATRIC" id="fig|338187.25.peg.370"/>
<dbReference type="UniPathway" id="UPA00094"/>
<dbReference type="Proteomes" id="UP000008152">
    <property type="component" value="Chromosome I"/>
</dbReference>
<dbReference type="GO" id="GO:0005737">
    <property type="term" value="C:cytoplasm"/>
    <property type="evidence" value="ECO:0007669"/>
    <property type="project" value="UniProtKB-SubCell"/>
</dbReference>
<dbReference type="GO" id="GO:0019171">
    <property type="term" value="F:(3R)-hydroxyacyl-[acyl-carrier-protein] dehydratase activity"/>
    <property type="evidence" value="ECO:0007669"/>
    <property type="project" value="UniProtKB-UniRule"/>
</dbReference>
<dbReference type="GO" id="GO:0034017">
    <property type="term" value="F:trans-2-decenoyl-acyl-carrier-protein isomerase activity"/>
    <property type="evidence" value="ECO:0007669"/>
    <property type="project" value="UniProtKB-UniRule"/>
</dbReference>
<dbReference type="GO" id="GO:0006636">
    <property type="term" value="P:unsaturated fatty acid biosynthetic process"/>
    <property type="evidence" value="ECO:0007669"/>
    <property type="project" value="UniProtKB-UniRule"/>
</dbReference>
<dbReference type="CDD" id="cd01287">
    <property type="entry name" value="FabA"/>
    <property type="match status" value="1"/>
</dbReference>
<dbReference type="FunFam" id="3.10.129.10:FF:000003">
    <property type="entry name" value="3-hydroxydecanoyl-[acyl-carrier-protein] dehydratase"/>
    <property type="match status" value="1"/>
</dbReference>
<dbReference type="Gene3D" id="3.10.129.10">
    <property type="entry name" value="Hotdog Thioesterase"/>
    <property type="match status" value="1"/>
</dbReference>
<dbReference type="HAMAP" id="MF_00405">
    <property type="entry name" value="FabA"/>
    <property type="match status" value="1"/>
</dbReference>
<dbReference type="InterPro" id="IPR010083">
    <property type="entry name" value="FabA"/>
</dbReference>
<dbReference type="InterPro" id="IPR013114">
    <property type="entry name" value="FabA_FabZ"/>
</dbReference>
<dbReference type="InterPro" id="IPR029069">
    <property type="entry name" value="HotDog_dom_sf"/>
</dbReference>
<dbReference type="NCBIfam" id="TIGR01749">
    <property type="entry name" value="fabA"/>
    <property type="match status" value="1"/>
</dbReference>
<dbReference type="NCBIfam" id="NF003509">
    <property type="entry name" value="PRK05174.1"/>
    <property type="match status" value="1"/>
</dbReference>
<dbReference type="PANTHER" id="PTHR30272">
    <property type="entry name" value="3-HYDROXYACYL-[ACYL-CARRIER-PROTEIN] DEHYDRATASE"/>
    <property type="match status" value="1"/>
</dbReference>
<dbReference type="PANTHER" id="PTHR30272:SF8">
    <property type="entry name" value="3-HYDROXYDECANOYL-[ACYL-CARRIER-PROTEIN] DEHYDRATASE"/>
    <property type="match status" value="1"/>
</dbReference>
<dbReference type="Pfam" id="PF07977">
    <property type="entry name" value="FabA"/>
    <property type="match status" value="1"/>
</dbReference>
<dbReference type="SUPFAM" id="SSF54637">
    <property type="entry name" value="Thioesterase/thiol ester dehydrase-isomerase"/>
    <property type="match status" value="1"/>
</dbReference>
<name>FABA_VIBC1</name>
<protein>
    <recommendedName>
        <fullName evidence="1">3-hydroxydecanoyl-[acyl-carrier-protein] dehydratase</fullName>
        <ecNumber evidence="1">4.2.1.59</ecNumber>
    </recommendedName>
    <alternativeName>
        <fullName evidence="1">3-hydroxyacyl-[acyl-carrier-protein] dehydratase FabA</fullName>
    </alternativeName>
    <alternativeName>
        <fullName evidence="1">Beta-hydroxydecanoyl thioester dehydrase</fullName>
    </alternativeName>
    <alternativeName>
        <fullName evidence="1">Trans-2-decenoyl-[acyl-carrier-protein] isomerase</fullName>
        <ecNumber evidence="1">5.3.3.14</ecNumber>
    </alternativeName>
</protein>
<organism>
    <name type="scientific">Vibrio campbellii (strain ATCC BAA-1116)</name>
    <dbReference type="NCBI Taxonomy" id="2902295"/>
    <lineage>
        <taxon>Bacteria</taxon>
        <taxon>Pseudomonadati</taxon>
        <taxon>Pseudomonadota</taxon>
        <taxon>Gammaproteobacteria</taxon>
        <taxon>Vibrionales</taxon>
        <taxon>Vibrionaceae</taxon>
        <taxon>Vibrio</taxon>
    </lineage>
</organism>
<feature type="chain" id="PRO_1000201226" description="3-hydroxydecanoyl-[acyl-carrier-protein] dehydratase">
    <location>
        <begin position="1"/>
        <end position="171"/>
    </location>
</feature>
<feature type="active site" evidence="1">
    <location>
        <position position="70"/>
    </location>
</feature>
<accession>A7N0M3</accession>
<evidence type="ECO:0000255" key="1">
    <source>
        <dbReference type="HAMAP-Rule" id="MF_00405"/>
    </source>
</evidence>
<comment type="function">
    <text evidence="1">Necessary for the introduction of cis unsaturation into fatty acids. Catalyzes the dehydration of (3R)-3-hydroxydecanoyl-ACP to E-(2)-decenoyl-ACP and then its isomerization to Z-(3)-decenoyl-ACP. Can catalyze the dehydratase reaction for beta-hydroxyacyl-ACPs with saturated chain lengths up to 16:0, being most active on intermediate chain length.</text>
</comment>
<comment type="catalytic activity">
    <reaction evidence="1">
        <text>a (3R)-hydroxyacyl-[ACP] = a (2E)-enoyl-[ACP] + H2O</text>
        <dbReference type="Rhea" id="RHEA:13097"/>
        <dbReference type="Rhea" id="RHEA-COMP:9925"/>
        <dbReference type="Rhea" id="RHEA-COMP:9945"/>
        <dbReference type="ChEBI" id="CHEBI:15377"/>
        <dbReference type="ChEBI" id="CHEBI:78784"/>
        <dbReference type="ChEBI" id="CHEBI:78827"/>
        <dbReference type="EC" id="4.2.1.59"/>
    </reaction>
</comment>
<comment type="catalytic activity">
    <reaction evidence="1">
        <text>(3R)-hydroxydecanoyl-[ACP] = (2E)-decenoyl-[ACP] + H2O</text>
        <dbReference type="Rhea" id="RHEA:41860"/>
        <dbReference type="Rhea" id="RHEA-COMP:9638"/>
        <dbReference type="Rhea" id="RHEA-COMP:9639"/>
        <dbReference type="ChEBI" id="CHEBI:15377"/>
        <dbReference type="ChEBI" id="CHEBI:78466"/>
        <dbReference type="ChEBI" id="CHEBI:78467"/>
    </reaction>
</comment>
<comment type="catalytic activity">
    <reaction evidence="1">
        <text>(2E)-decenoyl-[ACP] = (3Z)-decenoyl-[ACP]</text>
        <dbReference type="Rhea" id="RHEA:23568"/>
        <dbReference type="Rhea" id="RHEA-COMP:9639"/>
        <dbReference type="Rhea" id="RHEA-COMP:9927"/>
        <dbReference type="ChEBI" id="CHEBI:78467"/>
        <dbReference type="ChEBI" id="CHEBI:78798"/>
        <dbReference type="EC" id="5.3.3.14"/>
    </reaction>
</comment>
<comment type="pathway">
    <text evidence="1">Lipid metabolism; fatty acid biosynthesis.</text>
</comment>
<comment type="subunit">
    <text evidence="1">Homodimer.</text>
</comment>
<comment type="subcellular location">
    <subcellularLocation>
        <location evidence="1">Cytoplasm</location>
    </subcellularLocation>
</comment>
<comment type="similarity">
    <text evidence="1">Belongs to the thioester dehydratase family. FabA subfamily.</text>
</comment>
<sequence length="171" mass="18959">MQNKRDSYTREDLLASSQGELWPQGPQLPAPNMLMMDRITKMSETEGDFGKGLILAELDITPDLWFFDCHFPGDPVMPGCLGLDAMWQLVGFFLGWVGGKGKGRALGVGEVKFTGQILPTAKKVTYEIHMKRVVNRKLVMGLADGRVCVDGKEIYVAKDLKVGLFQDTSSF</sequence>